<protein>
    <recommendedName>
        <fullName evidence="1">Co-chaperonin GroES</fullName>
    </recommendedName>
    <alternativeName>
        <fullName evidence="1">10 kDa chaperonin</fullName>
    </alternativeName>
    <alternativeName>
        <fullName evidence="1">Chaperonin-10</fullName>
        <shortName evidence="1">Cpn10</shortName>
    </alternativeName>
</protein>
<accession>Q8VT59</accession>
<proteinExistence type="inferred from homology"/>
<reference key="1">
    <citation type="journal article" date="2002" name="J. Clin. Microbiol.">
        <title>groESL sequence determination, phylogenetic analysis, and species differentiation for viridans group streptococci.</title>
        <authorList>
            <person name="Teng L.-J."/>
            <person name="Hsueh P.R."/>
            <person name="Tsai J.C."/>
            <person name="Chen P.-W."/>
            <person name="Hsu J.-C."/>
            <person name="Lai H.C."/>
            <person name="Lee C.N."/>
            <person name="Ho S.W."/>
        </authorList>
    </citation>
    <scope>NUCLEOTIDE SEQUENCE [GENOMIC DNA]</scope>
    <source>
        <strain>ATCC 10558 / DSM 6777 / LMG 14518 / NCTC 7865 / SK 3</strain>
    </source>
</reference>
<name>CH10_STRGN</name>
<comment type="function">
    <text evidence="1">Together with the chaperonin GroEL, plays an essential role in assisting protein folding. The GroEL-GroES system forms a nano-cage that allows encapsulation of the non-native substrate proteins and provides a physical environment optimized to promote and accelerate protein folding. GroES binds to the apical surface of the GroEL ring, thereby capping the opening of the GroEL channel.</text>
</comment>
<comment type="subunit">
    <text evidence="1">Heptamer of 7 subunits arranged in a ring. Interacts with the chaperonin GroEL.</text>
</comment>
<comment type="subcellular location">
    <subcellularLocation>
        <location evidence="1">Cytoplasm</location>
    </subcellularLocation>
</comment>
<comment type="similarity">
    <text evidence="1">Belongs to the GroES chaperonin family.</text>
</comment>
<dbReference type="EMBL" id="AF338228">
    <property type="protein sequence ID" value="AAL73233.1"/>
    <property type="molecule type" value="Genomic_DNA"/>
</dbReference>
<dbReference type="RefSeq" id="WP_045504448.1">
    <property type="nucleotide sequence ID" value="NZ_RJOU01000008.1"/>
</dbReference>
<dbReference type="SMR" id="Q8VT59"/>
<dbReference type="GeneID" id="93788163"/>
<dbReference type="GO" id="GO:0005737">
    <property type="term" value="C:cytoplasm"/>
    <property type="evidence" value="ECO:0007669"/>
    <property type="project" value="UniProtKB-SubCell"/>
</dbReference>
<dbReference type="GO" id="GO:0005524">
    <property type="term" value="F:ATP binding"/>
    <property type="evidence" value="ECO:0007669"/>
    <property type="project" value="InterPro"/>
</dbReference>
<dbReference type="GO" id="GO:0046872">
    <property type="term" value="F:metal ion binding"/>
    <property type="evidence" value="ECO:0007669"/>
    <property type="project" value="TreeGrafter"/>
</dbReference>
<dbReference type="GO" id="GO:0044183">
    <property type="term" value="F:protein folding chaperone"/>
    <property type="evidence" value="ECO:0007669"/>
    <property type="project" value="InterPro"/>
</dbReference>
<dbReference type="GO" id="GO:0051087">
    <property type="term" value="F:protein-folding chaperone binding"/>
    <property type="evidence" value="ECO:0007669"/>
    <property type="project" value="TreeGrafter"/>
</dbReference>
<dbReference type="GO" id="GO:0051082">
    <property type="term" value="F:unfolded protein binding"/>
    <property type="evidence" value="ECO:0007669"/>
    <property type="project" value="TreeGrafter"/>
</dbReference>
<dbReference type="GO" id="GO:0051085">
    <property type="term" value="P:chaperone cofactor-dependent protein refolding"/>
    <property type="evidence" value="ECO:0007669"/>
    <property type="project" value="TreeGrafter"/>
</dbReference>
<dbReference type="CDD" id="cd00320">
    <property type="entry name" value="cpn10"/>
    <property type="match status" value="1"/>
</dbReference>
<dbReference type="FunFam" id="2.30.33.40:FF:000007">
    <property type="entry name" value="10 kDa chaperonin"/>
    <property type="match status" value="1"/>
</dbReference>
<dbReference type="Gene3D" id="2.30.33.40">
    <property type="entry name" value="GroES chaperonin"/>
    <property type="match status" value="1"/>
</dbReference>
<dbReference type="HAMAP" id="MF_00580">
    <property type="entry name" value="CH10"/>
    <property type="match status" value="1"/>
</dbReference>
<dbReference type="InterPro" id="IPR020818">
    <property type="entry name" value="Chaperonin_GroES"/>
</dbReference>
<dbReference type="InterPro" id="IPR037124">
    <property type="entry name" value="Chaperonin_GroES_sf"/>
</dbReference>
<dbReference type="InterPro" id="IPR018369">
    <property type="entry name" value="Chaprnonin_Cpn10_CS"/>
</dbReference>
<dbReference type="InterPro" id="IPR011032">
    <property type="entry name" value="GroES-like_sf"/>
</dbReference>
<dbReference type="NCBIfam" id="NF001528">
    <property type="entry name" value="PRK00364.1-4"/>
    <property type="match status" value="1"/>
</dbReference>
<dbReference type="PANTHER" id="PTHR10772">
    <property type="entry name" value="10 KDA HEAT SHOCK PROTEIN"/>
    <property type="match status" value="1"/>
</dbReference>
<dbReference type="PANTHER" id="PTHR10772:SF58">
    <property type="entry name" value="CO-CHAPERONIN GROES"/>
    <property type="match status" value="1"/>
</dbReference>
<dbReference type="Pfam" id="PF00166">
    <property type="entry name" value="Cpn10"/>
    <property type="match status" value="1"/>
</dbReference>
<dbReference type="PRINTS" id="PR00297">
    <property type="entry name" value="CHAPERONIN10"/>
</dbReference>
<dbReference type="SMART" id="SM00883">
    <property type="entry name" value="Cpn10"/>
    <property type="match status" value="1"/>
</dbReference>
<dbReference type="SUPFAM" id="SSF50129">
    <property type="entry name" value="GroES-like"/>
    <property type="match status" value="1"/>
</dbReference>
<dbReference type="PROSITE" id="PS00681">
    <property type="entry name" value="CHAPERONINS_CPN10"/>
    <property type="match status" value="1"/>
</dbReference>
<keyword id="KW-0143">Chaperone</keyword>
<keyword id="KW-0963">Cytoplasm</keyword>
<feature type="chain" id="PRO_0000174860" description="Co-chaperonin GroES">
    <location>
        <begin position="1"/>
        <end position="93"/>
    </location>
</feature>
<sequence>MLKPLGDRVVLKIEEKEEKVGGFVIAGNSHAATKTAAVVAVGQGVRTLTGELVAPSVKAGDKVLVESHAGVEVKDGEETYLLVSEANILAIVE</sequence>
<organism>
    <name type="scientific">Streptococcus gordonii</name>
    <dbReference type="NCBI Taxonomy" id="1302"/>
    <lineage>
        <taxon>Bacteria</taxon>
        <taxon>Bacillati</taxon>
        <taxon>Bacillota</taxon>
        <taxon>Bacilli</taxon>
        <taxon>Lactobacillales</taxon>
        <taxon>Streptococcaceae</taxon>
        <taxon>Streptococcus</taxon>
    </lineage>
</organism>
<evidence type="ECO:0000255" key="1">
    <source>
        <dbReference type="HAMAP-Rule" id="MF_00580"/>
    </source>
</evidence>
<gene>
    <name evidence="1" type="primary">groES</name>
    <name evidence="1" type="synonym">groS</name>
</gene>